<feature type="chain" id="PRO_0000204612" description="Nuclear transcription factor Y subunit beta">
    <location>
        <begin position="1"/>
        <end position="205"/>
    </location>
</feature>
<feature type="DNA-binding region" evidence="1">
    <location>
        <begin position="57"/>
        <end position="63"/>
    </location>
</feature>
<feature type="region of interest" description="A domain">
    <location>
        <begin position="1"/>
        <end position="50"/>
    </location>
</feature>
<feature type="region of interest" description="Disordered" evidence="2">
    <location>
        <begin position="24"/>
        <end position="50"/>
    </location>
</feature>
<feature type="region of interest" description="B domain">
    <location>
        <begin position="51"/>
        <end position="140"/>
    </location>
</feature>
<feature type="region of interest" description="Subunit association domain (SAD)" evidence="1">
    <location>
        <begin position="84"/>
        <end position="95"/>
    </location>
</feature>
<feature type="region of interest" description="C domain">
    <location>
        <begin position="141"/>
        <end position="201"/>
    </location>
</feature>
<feature type="compositionally biased region" description="Basic and acidic residues" evidence="2">
    <location>
        <begin position="37"/>
        <end position="50"/>
    </location>
</feature>
<reference key="1">
    <citation type="journal article" date="2005" name="Genome Biol.">
        <title>Full-length cDNAs from chicken bursal lymphocytes to facilitate gene function analysis.</title>
        <authorList>
            <person name="Caldwell R.B."/>
            <person name="Kierzek A.M."/>
            <person name="Arakawa H."/>
            <person name="Bezzubov Y."/>
            <person name="Zaim J."/>
            <person name="Fiedler P."/>
            <person name="Kutter S."/>
            <person name="Blagodatski A."/>
            <person name="Kostovska D."/>
            <person name="Koter M."/>
            <person name="Plachy J."/>
            <person name="Carninci P."/>
            <person name="Hayashizaki Y."/>
            <person name="Buerstedde J.-M."/>
        </authorList>
    </citation>
    <scope>NUCLEOTIDE SEQUENCE [LARGE SCALE MRNA]</scope>
    <source>
        <strain>CB</strain>
        <tissue>Bursa of Fabricius</tissue>
    </source>
</reference>
<reference key="2">
    <citation type="journal article" date="1992" name="Nucleic Acids Res.">
        <title>Evolutionary variation of the CCAAT-binding transcription factor NF-Y.</title>
        <authorList>
            <person name="Li X.-Y."/>
            <person name="Mantovani R."/>
            <person name="Hooft van Huijsduijnen R."/>
            <person name="Andre I."/>
            <person name="Benoist C."/>
            <person name="Mathis D."/>
        </authorList>
    </citation>
    <scope>NUCLEOTIDE SEQUENCE [MRNA] OF 1-151</scope>
</reference>
<protein>
    <recommendedName>
        <fullName>Nuclear transcription factor Y subunit beta</fullName>
    </recommendedName>
    <alternativeName>
        <fullName>CAAT box DNA-binding protein subunit B</fullName>
    </alternativeName>
    <alternativeName>
        <fullName>Nuclear transcription factor Y subunit B</fullName>
        <shortName>NF-YB</shortName>
    </alternativeName>
</protein>
<accession>P25207</accession>
<accession>Q5ZL45</accession>
<sequence>MDGDSSTTDASQLGIAGDYIGGSHYVIQPHDDTEDSMNDHEDTNGSKESFREQDIYLPIANVARIMKNAIPQTGKIAKDAKECVQECVSEFISFITSEASERCHQEKRKTINGEDILFAMSTLGFDSYVEPLKLYLQKFREAMKGEKGIGGTVTTGDGLSEELTEEAFTNQLPAGLITTDGQQQNVMVYTTSYQQISGVQQIQFS</sequence>
<dbReference type="EMBL" id="AJ719889">
    <property type="protein sequence ID" value="CAG31548.1"/>
    <property type="molecule type" value="mRNA"/>
</dbReference>
<dbReference type="EMBL" id="X59713">
    <property type="protein sequence ID" value="CAA42233.1"/>
    <property type="status" value="ALT_SEQ"/>
    <property type="molecule type" value="mRNA"/>
</dbReference>
<dbReference type="PIR" id="S24469">
    <property type="entry name" value="S24469"/>
</dbReference>
<dbReference type="RefSeq" id="NP_001383173.1">
    <property type="nucleotide sequence ID" value="NM_001396244.1"/>
</dbReference>
<dbReference type="RefSeq" id="NP_001383174.1">
    <property type="nucleotide sequence ID" value="NM_001396245.1"/>
</dbReference>
<dbReference type="RefSeq" id="NP_001383175.1">
    <property type="nucleotide sequence ID" value="NM_001396246.1"/>
</dbReference>
<dbReference type="RefSeq" id="NP_001383176.1">
    <property type="nucleotide sequence ID" value="NM_001396247.1"/>
</dbReference>
<dbReference type="RefSeq" id="NP_001383177.1">
    <property type="nucleotide sequence ID" value="NM_001396248.1"/>
</dbReference>
<dbReference type="RefSeq" id="NP_001383178.1">
    <property type="nucleotide sequence ID" value="NM_001396249.1"/>
</dbReference>
<dbReference type="RefSeq" id="NP_001383179.1">
    <property type="nucleotide sequence ID" value="NM_001396250.1"/>
</dbReference>
<dbReference type="RefSeq" id="NP_001383180.1">
    <property type="nucleotide sequence ID" value="NM_001396251.1"/>
</dbReference>
<dbReference type="RefSeq" id="NP_001383181.1">
    <property type="nucleotide sequence ID" value="NM_001396252.1"/>
</dbReference>
<dbReference type="RefSeq" id="NP_001383182.1">
    <property type="nucleotide sequence ID" value="NM_001396253.1"/>
</dbReference>
<dbReference type="RefSeq" id="NP_990600.1">
    <property type="nucleotide sequence ID" value="NM_205269.1"/>
</dbReference>
<dbReference type="SMR" id="P25207"/>
<dbReference type="FunCoup" id="P25207">
    <property type="interactions" value="1439"/>
</dbReference>
<dbReference type="STRING" id="9031.ENSGALP00000070761"/>
<dbReference type="PaxDb" id="9031-ENSGALP00000020733"/>
<dbReference type="GeneID" id="396205"/>
<dbReference type="KEGG" id="gga:396205"/>
<dbReference type="VEuPathDB" id="HostDB:geneid_396205"/>
<dbReference type="eggNOG" id="KOG0869">
    <property type="taxonomic scope" value="Eukaryota"/>
</dbReference>
<dbReference type="HOGENOM" id="CLU_066247_9_2_1"/>
<dbReference type="InParanoid" id="P25207"/>
<dbReference type="OMA" id="SERYHHE"/>
<dbReference type="OrthoDB" id="386949at2759"/>
<dbReference type="PhylomeDB" id="P25207"/>
<dbReference type="TreeFam" id="TF314521"/>
<dbReference type="PRO" id="PR:P25207"/>
<dbReference type="Proteomes" id="UP000000539">
    <property type="component" value="Chromosome 1"/>
</dbReference>
<dbReference type="Bgee" id="ENSGALG00000041193">
    <property type="expression patterns" value="Expressed in spermatocyte and 12 other cell types or tissues"/>
</dbReference>
<dbReference type="GO" id="GO:0016602">
    <property type="term" value="C:CCAAT-binding factor complex"/>
    <property type="evidence" value="ECO:0000318"/>
    <property type="project" value="GO_Central"/>
</dbReference>
<dbReference type="GO" id="GO:0001228">
    <property type="term" value="F:DNA-binding transcription activator activity, RNA polymerase II-specific"/>
    <property type="evidence" value="ECO:0007669"/>
    <property type="project" value="InterPro"/>
</dbReference>
<dbReference type="GO" id="GO:0000981">
    <property type="term" value="F:DNA-binding transcription factor activity, RNA polymerase II-specific"/>
    <property type="evidence" value="ECO:0000318"/>
    <property type="project" value="GO_Central"/>
</dbReference>
<dbReference type="GO" id="GO:0046982">
    <property type="term" value="F:protein heterodimerization activity"/>
    <property type="evidence" value="ECO:0007669"/>
    <property type="project" value="InterPro"/>
</dbReference>
<dbReference type="GO" id="GO:0043565">
    <property type="term" value="F:sequence-specific DNA binding"/>
    <property type="evidence" value="ECO:0007669"/>
    <property type="project" value="InterPro"/>
</dbReference>
<dbReference type="GO" id="GO:0006357">
    <property type="term" value="P:regulation of transcription by RNA polymerase II"/>
    <property type="evidence" value="ECO:0000318"/>
    <property type="project" value="GO_Central"/>
</dbReference>
<dbReference type="CDD" id="cd22907">
    <property type="entry name" value="HFD_NFYB"/>
    <property type="match status" value="1"/>
</dbReference>
<dbReference type="FunFam" id="1.10.20.10:FF:000027">
    <property type="entry name" value="Nuclear transcription factor Y subunit beta"/>
    <property type="match status" value="1"/>
</dbReference>
<dbReference type="Gene3D" id="1.10.20.10">
    <property type="entry name" value="Histone, subunit A"/>
    <property type="match status" value="1"/>
</dbReference>
<dbReference type="InterPro" id="IPR003958">
    <property type="entry name" value="CBFA_NFYB_domain"/>
</dbReference>
<dbReference type="InterPro" id="IPR009072">
    <property type="entry name" value="Histone-fold"/>
</dbReference>
<dbReference type="InterPro" id="IPR027113">
    <property type="entry name" value="Transc_fact_NFYB/HAP3"/>
</dbReference>
<dbReference type="InterPro" id="IPR003956">
    <property type="entry name" value="Transcrpt_fac_NFYB/HAP3_CS"/>
</dbReference>
<dbReference type="PANTHER" id="PTHR11064">
    <property type="entry name" value="CCAAT-BINDING TRANSCRIPTION FACTOR-RELATED"/>
    <property type="match status" value="1"/>
</dbReference>
<dbReference type="PANTHER" id="PTHR11064:SF9">
    <property type="entry name" value="NUCLEAR TRANSCRIPTION FACTOR Y SUBUNIT BETA"/>
    <property type="match status" value="1"/>
</dbReference>
<dbReference type="Pfam" id="PF00808">
    <property type="entry name" value="CBFD_NFYB_HMF"/>
    <property type="match status" value="1"/>
</dbReference>
<dbReference type="PRINTS" id="PR00615">
    <property type="entry name" value="CCAATSUBUNTA"/>
</dbReference>
<dbReference type="SUPFAM" id="SSF47113">
    <property type="entry name" value="Histone-fold"/>
    <property type="match status" value="1"/>
</dbReference>
<dbReference type="PROSITE" id="PS00685">
    <property type="entry name" value="NFYB_HAP3"/>
    <property type="match status" value="1"/>
</dbReference>
<gene>
    <name type="primary">NFYB</name>
    <name type="ORF">RCJMB04_7n24</name>
</gene>
<evidence type="ECO:0000250" key="1"/>
<evidence type="ECO:0000256" key="2">
    <source>
        <dbReference type="SAM" id="MobiDB-lite"/>
    </source>
</evidence>
<evidence type="ECO:0000305" key="3"/>
<comment type="function">
    <text>Component of the sequence-specific heterotrimeric transcription factor (NF-Y) which specifically recognizes a 5'-CCAAT-3' box motif found in the promoters of its target genes. NF-Y can function as both an activator and a repressor, depending on its interacting cofactors.</text>
</comment>
<comment type="subunit">
    <text evidence="1">Heterotrimeric transcription factor composed of three components, NF-YA, NF-YB and NF-YC. NF-YB and NF-YC must interact and dimerize for NF-YA association and DNA binding (By similarity).</text>
</comment>
<comment type="subcellular location">
    <subcellularLocation>
        <location>Nucleus</location>
    </subcellularLocation>
</comment>
<comment type="domain">
    <text>Can be divided into 3 domains: the weakly conserved A domain, the highly conserved B domain thought to be involved in subunit interaction and DNA binding, and the Glu-rich C domain.</text>
</comment>
<comment type="similarity">
    <text evidence="3">Belongs to the NFYB/HAP3 subunit family.</text>
</comment>
<name>NFYB_CHICK</name>
<proteinExistence type="evidence at transcript level"/>
<keyword id="KW-0010">Activator</keyword>
<keyword id="KW-0238">DNA-binding</keyword>
<keyword id="KW-0539">Nucleus</keyword>
<keyword id="KW-1185">Reference proteome</keyword>
<keyword id="KW-0804">Transcription</keyword>
<keyword id="KW-0805">Transcription regulation</keyword>
<organism>
    <name type="scientific">Gallus gallus</name>
    <name type="common">Chicken</name>
    <dbReference type="NCBI Taxonomy" id="9031"/>
    <lineage>
        <taxon>Eukaryota</taxon>
        <taxon>Metazoa</taxon>
        <taxon>Chordata</taxon>
        <taxon>Craniata</taxon>
        <taxon>Vertebrata</taxon>
        <taxon>Euteleostomi</taxon>
        <taxon>Archelosauria</taxon>
        <taxon>Archosauria</taxon>
        <taxon>Dinosauria</taxon>
        <taxon>Saurischia</taxon>
        <taxon>Theropoda</taxon>
        <taxon>Coelurosauria</taxon>
        <taxon>Aves</taxon>
        <taxon>Neognathae</taxon>
        <taxon>Galloanserae</taxon>
        <taxon>Galliformes</taxon>
        <taxon>Phasianidae</taxon>
        <taxon>Phasianinae</taxon>
        <taxon>Gallus</taxon>
    </lineage>
</organism>